<evidence type="ECO:0000255" key="1">
    <source>
        <dbReference type="HAMAP-Rule" id="MF_00033"/>
    </source>
</evidence>
<accession>A8YUN9</accession>
<name>MURG_LACH4</name>
<proteinExistence type="inferred from homology"/>
<comment type="function">
    <text evidence="1">Cell wall formation. Catalyzes the transfer of a GlcNAc subunit on undecaprenyl-pyrophosphoryl-MurNAc-pentapeptide (lipid intermediate I) to form undecaprenyl-pyrophosphoryl-MurNAc-(pentapeptide)GlcNAc (lipid intermediate II).</text>
</comment>
<comment type="catalytic activity">
    <reaction evidence="1">
        <text>Mur2Ac(oyl-L-Ala-gamma-D-Glu-L-Lys-D-Ala-D-Ala)-di-trans,octa-cis-undecaprenyl diphosphate + UDP-N-acetyl-alpha-D-glucosamine = beta-D-GlcNAc-(1-&gt;4)-Mur2Ac(oyl-L-Ala-gamma-D-Glu-L-Lys-D-Ala-D-Ala)-di-trans,octa-cis-undecaprenyl diphosphate + UDP + H(+)</text>
        <dbReference type="Rhea" id="RHEA:23192"/>
        <dbReference type="ChEBI" id="CHEBI:15378"/>
        <dbReference type="ChEBI" id="CHEBI:57705"/>
        <dbReference type="ChEBI" id="CHEBI:58223"/>
        <dbReference type="ChEBI" id="CHEBI:60032"/>
        <dbReference type="ChEBI" id="CHEBI:60033"/>
        <dbReference type="EC" id="2.4.1.227"/>
    </reaction>
</comment>
<comment type="pathway">
    <text evidence="1">Cell wall biogenesis; peptidoglycan biosynthesis.</text>
</comment>
<comment type="subcellular location">
    <subcellularLocation>
        <location evidence="1">Cell membrane</location>
        <topology evidence="1">Peripheral membrane protein</topology>
        <orientation evidence="1">Cytoplasmic side</orientation>
    </subcellularLocation>
</comment>
<comment type="similarity">
    <text evidence="1">Belongs to the glycosyltransferase 28 family. MurG subfamily.</text>
</comment>
<dbReference type="EC" id="2.4.1.227" evidence="1"/>
<dbReference type="EMBL" id="CP000517">
    <property type="protein sequence ID" value="ABX26977.1"/>
    <property type="molecule type" value="Genomic_DNA"/>
</dbReference>
<dbReference type="RefSeq" id="WP_012211698.1">
    <property type="nucleotide sequence ID" value="NC_010080.1"/>
</dbReference>
<dbReference type="SMR" id="A8YUN9"/>
<dbReference type="CAZy" id="GT28">
    <property type="family name" value="Glycosyltransferase Family 28"/>
</dbReference>
<dbReference type="KEGG" id="lhe:lhv_0856"/>
<dbReference type="eggNOG" id="COG0707">
    <property type="taxonomic scope" value="Bacteria"/>
</dbReference>
<dbReference type="HOGENOM" id="CLU_037404_0_1_9"/>
<dbReference type="UniPathway" id="UPA00219"/>
<dbReference type="Proteomes" id="UP000000790">
    <property type="component" value="Chromosome"/>
</dbReference>
<dbReference type="GO" id="GO:0005886">
    <property type="term" value="C:plasma membrane"/>
    <property type="evidence" value="ECO:0007669"/>
    <property type="project" value="UniProtKB-SubCell"/>
</dbReference>
<dbReference type="GO" id="GO:0050511">
    <property type="term" value="F:undecaprenyldiphospho-muramoylpentapeptide beta-N-acetylglucosaminyltransferase activity"/>
    <property type="evidence" value="ECO:0007669"/>
    <property type="project" value="UniProtKB-UniRule"/>
</dbReference>
<dbReference type="GO" id="GO:0005975">
    <property type="term" value="P:carbohydrate metabolic process"/>
    <property type="evidence" value="ECO:0007669"/>
    <property type="project" value="InterPro"/>
</dbReference>
<dbReference type="GO" id="GO:0051301">
    <property type="term" value="P:cell division"/>
    <property type="evidence" value="ECO:0007669"/>
    <property type="project" value="UniProtKB-KW"/>
</dbReference>
<dbReference type="GO" id="GO:0071555">
    <property type="term" value="P:cell wall organization"/>
    <property type="evidence" value="ECO:0007669"/>
    <property type="project" value="UniProtKB-KW"/>
</dbReference>
<dbReference type="GO" id="GO:0030259">
    <property type="term" value="P:lipid glycosylation"/>
    <property type="evidence" value="ECO:0007669"/>
    <property type="project" value="UniProtKB-UniRule"/>
</dbReference>
<dbReference type="GO" id="GO:0009252">
    <property type="term" value="P:peptidoglycan biosynthetic process"/>
    <property type="evidence" value="ECO:0007669"/>
    <property type="project" value="UniProtKB-UniRule"/>
</dbReference>
<dbReference type="GO" id="GO:0008360">
    <property type="term" value="P:regulation of cell shape"/>
    <property type="evidence" value="ECO:0007669"/>
    <property type="project" value="UniProtKB-KW"/>
</dbReference>
<dbReference type="CDD" id="cd03785">
    <property type="entry name" value="GT28_MurG"/>
    <property type="match status" value="1"/>
</dbReference>
<dbReference type="Gene3D" id="3.40.50.2000">
    <property type="entry name" value="Glycogen Phosphorylase B"/>
    <property type="match status" value="2"/>
</dbReference>
<dbReference type="HAMAP" id="MF_00033">
    <property type="entry name" value="MurG"/>
    <property type="match status" value="1"/>
</dbReference>
<dbReference type="InterPro" id="IPR006009">
    <property type="entry name" value="GlcNAc_MurG"/>
</dbReference>
<dbReference type="InterPro" id="IPR007235">
    <property type="entry name" value="Glyco_trans_28_C"/>
</dbReference>
<dbReference type="InterPro" id="IPR004276">
    <property type="entry name" value="GlycoTrans_28_N"/>
</dbReference>
<dbReference type="NCBIfam" id="TIGR01133">
    <property type="entry name" value="murG"/>
    <property type="match status" value="1"/>
</dbReference>
<dbReference type="PANTHER" id="PTHR21015:SF22">
    <property type="entry name" value="GLYCOSYLTRANSFERASE"/>
    <property type="match status" value="1"/>
</dbReference>
<dbReference type="PANTHER" id="PTHR21015">
    <property type="entry name" value="UDP-N-ACETYLGLUCOSAMINE--N-ACETYLMURAMYL-(PENTAPEPTIDE) PYROPHOSPHORYL-UNDECAPRENOL N-ACETYLGLUCOSAMINE TRANSFERASE 1"/>
    <property type="match status" value="1"/>
</dbReference>
<dbReference type="Pfam" id="PF04101">
    <property type="entry name" value="Glyco_tran_28_C"/>
    <property type="match status" value="1"/>
</dbReference>
<dbReference type="Pfam" id="PF03033">
    <property type="entry name" value="Glyco_transf_28"/>
    <property type="match status" value="1"/>
</dbReference>
<dbReference type="SUPFAM" id="SSF53756">
    <property type="entry name" value="UDP-Glycosyltransferase/glycogen phosphorylase"/>
    <property type="match status" value="1"/>
</dbReference>
<sequence length="368" mass="40579">MRVIFTGGGTGGHIYPIMAIIERLKERGISTNDKILFVGTKKGLESKIVPAAGVNFKTINIQGFNRKHPLKNFETIKLFLQATKSARKILKEFKPDVVLGTGGYVSGAMVYEAAKMHIPTMIHESNSVVGLANKFLGHYVDRICYTFDDAAKEFPEKKKLVKTGNPRSQQVLSLHEEKIDIKKKWGLNPDMPTVLVFGGSRGALAINRIMLKSLMNLKTKPYQIIWATGTYYFDSVQKKLKGVDIGTNIKVLPYIKNMPGLLPEMTCVVSRSGATSIAEFTALGVPVILIPSPNVTHNHQMKNALDLEKAGAALVIPEDDLNPNNFVSSIDHILLDEKYAKEMSQASKALGVPDASDQVIKVMEEISR</sequence>
<feature type="chain" id="PRO_1000071025" description="UDP-N-acetylglucosamine--N-acetylmuramyl-(pentapeptide) pyrophosphoryl-undecaprenol N-acetylglucosamine transferase">
    <location>
        <begin position="1"/>
        <end position="368"/>
    </location>
</feature>
<feature type="binding site" evidence="1">
    <location>
        <begin position="10"/>
        <end position="12"/>
    </location>
    <ligand>
        <name>UDP-N-acetyl-alpha-D-glucosamine</name>
        <dbReference type="ChEBI" id="CHEBI:57705"/>
    </ligand>
</feature>
<feature type="binding site" evidence="1">
    <location>
        <position position="126"/>
    </location>
    <ligand>
        <name>UDP-N-acetyl-alpha-D-glucosamine</name>
        <dbReference type="ChEBI" id="CHEBI:57705"/>
    </ligand>
</feature>
<feature type="binding site" evidence="1">
    <location>
        <position position="200"/>
    </location>
    <ligand>
        <name>UDP-N-acetyl-alpha-D-glucosamine</name>
        <dbReference type="ChEBI" id="CHEBI:57705"/>
    </ligand>
</feature>
<feature type="binding site" evidence="1">
    <location>
        <position position="255"/>
    </location>
    <ligand>
        <name>UDP-N-acetyl-alpha-D-glucosamine</name>
        <dbReference type="ChEBI" id="CHEBI:57705"/>
    </ligand>
</feature>
<feature type="binding site" evidence="1">
    <location>
        <position position="300"/>
    </location>
    <ligand>
        <name>UDP-N-acetyl-alpha-D-glucosamine</name>
        <dbReference type="ChEBI" id="CHEBI:57705"/>
    </ligand>
</feature>
<gene>
    <name evidence="1" type="primary">murG</name>
    <name type="ordered locus">lhv_0856</name>
</gene>
<reference key="1">
    <citation type="journal article" date="2008" name="J. Bacteriol.">
        <title>Genome sequence of Lactobacillus helveticus: an organism distinguished by selective gene loss and IS element expansion.</title>
        <authorList>
            <person name="Callanan M."/>
            <person name="Kaleta P."/>
            <person name="O'Callaghan J."/>
            <person name="O'Sullivan O."/>
            <person name="Jordan K."/>
            <person name="McAuliffe O."/>
            <person name="Sangrador-Vegas A."/>
            <person name="Slattery L."/>
            <person name="Fitzgerald G.F."/>
            <person name="Beresford T."/>
            <person name="Ross R.P."/>
        </authorList>
    </citation>
    <scope>NUCLEOTIDE SEQUENCE [LARGE SCALE GENOMIC DNA]</scope>
    <source>
        <strain>DPC 4571</strain>
    </source>
</reference>
<protein>
    <recommendedName>
        <fullName evidence="1">UDP-N-acetylglucosamine--N-acetylmuramyl-(pentapeptide) pyrophosphoryl-undecaprenol N-acetylglucosamine transferase</fullName>
        <ecNumber evidence="1">2.4.1.227</ecNumber>
    </recommendedName>
    <alternativeName>
        <fullName evidence="1">Undecaprenyl-PP-MurNAc-pentapeptide-UDPGlcNAc GlcNAc transferase</fullName>
    </alternativeName>
</protein>
<keyword id="KW-0131">Cell cycle</keyword>
<keyword id="KW-0132">Cell division</keyword>
<keyword id="KW-1003">Cell membrane</keyword>
<keyword id="KW-0133">Cell shape</keyword>
<keyword id="KW-0961">Cell wall biogenesis/degradation</keyword>
<keyword id="KW-0328">Glycosyltransferase</keyword>
<keyword id="KW-0472">Membrane</keyword>
<keyword id="KW-0573">Peptidoglycan synthesis</keyword>
<keyword id="KW-0808">Transferase</keyword>
<organism>
    <name type="scientific">Lactobacillus helveticus (strain DPC 4571)</name>
    <dbReference type="NCBI Taxonomy" id="405566"/>
    <lineage>
        <taxon>Bacteria</taxon>
        <taxon>Bacillati</taxon>
        <taxon>Bacillota</taxon>
        <taxon>Bacilli</taxon>
        <taxon>Lactobacillales</taxon>
        <taxon>Lactobacillaceae</taxon>
        <taxon>Lactobacillus</taxon>
    </lineage>
</organism>